<reference key="1">
    <citation type="journal article" date="2010" name="J. Proteome Res.">
        <title>Molecular diversification of peptide toxins from the tarantula Haplopelma hainanum (Ornithoctonus hainana) venom based on transcriptomic, peptidomic, and genomic analyses.</title>
        <authorList>
            <person name="Tang X."/>
            <person name="Zhang Y."/>
            <person name="Hu W."/>
            <person name="Xu D."/>
            <person name="Tao H."/>
            <person name="Yang X."/>
            <person name="Li Y."/>
            <person name="Jiang L."/>
            <person name="Liang S."/>
        </authorList>
    </citation>
    <scope>NUCLEOTIDE SEQUENCE [LARGE SCALE MRNA]</scope>
    <scope>PROTEIN SEQUENCE OF 76-117</scope>
    <scope>IDENTIFICATION BY MASS SPECTROMETRY</scope>
    <source>
        <tissue>Venom</tissue>
        <tissue>Venom gland</tissue>
    </source>
</reference>
<organism>
    <name type="scientific">Cyriopagopus hainanus</name>
    <name type="common">Chinese bird spider</name>
    <name type="synonym">Haplopelma hainanum</name>
    <dbReference type="NCBI Taxonomy" id="209901"/>
    <lineage>
        <taxon>Eukaryota</taxon>
        <taxon>Metazoa</taxon>
        <taxon>Ecdysozoa</taxon>
        <taxon>Arthropoda</taxon>
        <taxon>Chelicerata</taxon>
        <taxon>Arachnida</taxon>
        <taxon>Araneae</taxon>
        <taxon>Mygalomorphae</taxon>
        <taxon>Theraphosidae</taxon>
        <taxon>Haplopelma</taxon>
    </lineage>
</organism>
<evidence type="ECO:0000250" key="1"/>
<evidence type="ECO:0000255" key="2"/>
<evidence type="ECO:0000269" key="3">
    <source>
    </source>
</evidence>
<evidence type="ECO:0000305" key="4"/>
<keyword id="KW-0903">Direct protein sequencing</keyword>
<keyword id="KW-1015">Disulfide bond</keyword>
<keyword id="KW-0872">Ion channel impairing toxin</keyword>
<keyword id="KW-0960">Knottin</keyword>
<keyword id="KW-0964">Secreted</keyword>
<keyword id="KW-0732">Signal</keyword>
<keyword id="KW-0800">Toxin</keyword>
<dbReference type="EMBL" id="GU292976">
    <property type="protein sequence ID" value="ADB56792.1"/>
    <property type="molecule type" value="mRNA"/>
</dbReference>
<dbReference type="ArachnoServer" id="AS001918">
    <property type="toxin name" value="U9-theraphotoxin-Hhn1a"/>
</dbReference>
<dbReference type="GO" id="GO:0005576">
    <property type="term" value="C:extracellular region"/>
    <property type="evidence" value="ECO:0007669"/>
    <property type="project" value="UniProtKB-SubCell"/>
</dbReference>
<dbReference type="GO" id="GO:0019871">
    <property type="term" value="F:sodium channel inhibitor activity"/>
    <property type="evidence" value="ECO:0007669"/>
    <property type="project" value="InterPro"/>
</dbReference>
<dbReference type="GO" id="GO:0090729">
    <property type="term" value="F:toxin activity"/>
    <property type="evidence" value="ECO:0007669"/>
    <property type="project" value="UniProtKB-KW"/>
</dbReference>
<dbReference type="InterPro" id="IPR012627">
    <property type="entry name" value="Toxin_22"/>
</dbReference>
<dbReference type="Pfam" id="PF08092">
    <property type="entry name" value="Toxin_22"/>
    <property type="match status" value="1"/>
</dbReference>
<accession>D2Y299</accession>
<feature type="signal peptide" evidence="2">
    <location>
        <begin position="1"/>
        <end position="21"/>
    </location>
</feature>
<feature type="propeptide" id="PRO_0000400965" evidence="3">
    <location>
        <begin position="22"/>
        <end position="75"/>
    </location>
</feature>
<feature type="peptide" id="PRO_0000400966" description="U9-theraphotoxin-Hhn1a">
    <location>
        <begin position="76"/>
        <end position="117"/>
    </location>
</feature>
<feature type="disulfide bond" evidence="1">
    <location>
        <begin position="76"/>
        <end position="94"/>
    </location>
</feature>
<feature type="disulfide bond" evidence="1">
    <location>
        <begin position="83"/>
        <end position="99"/>
    </location>
</feature>
<feature type="disulfide bond" evidence="1">
    <location>
        <begin position="93"/>
        <end position="114"/>
    </location>
</feature>
<name>H19A1_CYRHA</name>
<proteinExistence type="evidence at protein level"/>
<protein>
    <recommendedName>
        <fullName>U9-theraphotoxin-Hhn1a</fullName>
        <shortName>U9-TRTX-Hhn1a</shortName>
    </recommendedName>
    <alternativeName>
        <fullName>Hainantoxin-XIX</fullName>
        <shortName>HNTX-XIX</shortName>
    </alternativeName>
</protein>
<comment type="function">
    <text evidence="1">Probable ion channel inhibitor.</text>
</comment>
<comment type="subcellular location">
    <subcellularLocation>
        <location>Secreted</location>
    </subcellularLocation>
</comment>
<comment type="tissue specificity">
    <text>Expressed by the venom gland.</text>
</comment>
<comment type="domain">
    <text evidence="1">The presence of a 'disulfide through disulfide knot' structurally defines this protein as a knottin.</text>
</comment>
<comment type="similarity">
    <text evidence="4">Belongs to the neurotoxin 14 (magi-1) family. 01 (HNTX-16) subfamily.</text>
</comment>
<sequence>MNTVRVTFLLVFVLAVSLGQADEDGNRMEMRQEIEKTEADSSYFAENLLLQKLEELEAKLWEETSEESRNSRQKRCAAEGIPCDPNPVKDLPCCSGLACLKPTLHGIWYKHHYCYTQ</sequence>